<dbReference type="EC" id="3.2.1.73"/>
<dbReference type="EMBL" id="X57094">
    <property type="protein sequence ID" value="CAA40379.1"/>
    <property type="molecule type" value="Genomic_DNA"/>
</dbReference>
<dbReference type="PIR" id="S19012">
    <property type="entry name" value="S19012"/>
</dbReference>
<dbReference type="SMR" id="P45797"/>
<dbReference type="CAZy" id="GH16">
    <property type="family name" value="Glycoside Hydrolase Family 16"/>
</dbReference>
<dbReference type="eggNOG" id="COG2273">
    <property type="taxonomic scope" value="Bacteria"/>
</dbReference>
<dbReference type="GO" id="GO:0042972">
    <property type="term" value="F:licheninase activity"/>
    <property type="evidence" value="ECO:0007669"/>
    <property type="project" value="UniProtKB-EC"/>
</dbReference>
<dbReference type="GO" id="GO:0005975">
    <property type="term" value="P:carbohydrate metabolic process"/>
    <property type="evidence" value="ECO:0007669"/>
    <property type="project" value="InterPro"/>
</dbReference>
<dbReference type="CDD" id="cd02175">
    <property type="entry name" value="GH16_lichenase"/>
    <property type="match status" value="1"/>
</dbReference>
<dbReference type="Gene3D" id="2.60.120.200">
    <property type="match status" value="1"/>
</dbReference>
<dbReference type="InterPro" id="IPR044791">
    <property type="entry name" value="Beta-glucanase/XTH"/>
</dbReference>
<dbReference type="InterPro" id="IPR008264">
    <property type="entry name" value="Beta_glucanase"/>
</dbReference>
<dbReference type="InterPro" id="IPR013320">
    <property type="entry name" value="ConA-like_dom_sf"/>
</dbReference>
<dbReference type="InterPro" id="IPR000757">
    <property type="entry name" value="GH16"/>
</dbReference>
<dbReference type="InterPro" id="IPR008263">
    <property type="entry name" value="GH16_AS"/>
</dbReference>
<dbReference type="NCBIfam" id="NF047856">
    <property type="entry name" value="BGlucanaseBglS"/>
    <property type="match status" value="1"/>
</dbReference>
<dbReference type="PANTHER" id="PTHR31062">
    <property type="entry name" value="XYLOGLUCAN ENDOTRANSGLUCOSYLASE/HYDROLASE PROTEIN 8-RELATED"/>
    <property type="match status" value="1"/>
</dbReference>
<dbReference type="Pfam" id="PF00722">
    <property type="entry name" value="Glyco_hydro_16"/>
    <property type="match status" value="1"/>
</dbReference>
<dbReference type="PRINTS" id="PR00737">
    <property type="entry name" value="GLHYDRLASE16"/>
</dbReference>
<dbReference type="SUPFAM" id="SSF49899">
    <property type="entry name" value="Concanavalin A-like lectins/glucanases"/>
    <property type="match status" value="1"/>
</dbReference>
<dbReference type="PROSITE" id="PS01034">
    <property type="entry name" value="GH16_1"/>
    <property type="match status" value="1"/>
</dbReference>
<dbReference type="PROSITE" id="PS51762">
    <property type="entry name" value="GH16_2"/>
    <property type="match status" value="1"/>
</dbReference>
<organism>
    <name type="scientific">Paenibacillus polymyxa</name>
    <name type="common">Bacillus polymyxa</name>
    <dbReference type="NCBI Taxonomy" id="1406"/>
    <lineage>
        <taxon>Bacteria</taxon>
        <taxon>Bacillati</taxon>
        <taxon>Bacillota</taxon>
        <taxon>Bacilli</taxon>
        <taxon>Bacillales</taxon>
        <taxon>Paenibacillaceae</taxon>
        <taxon>Paenibacillus</taxon>
    </lineage>
</organism>
<keyword id="KW-1015">Disulfide bond</keyword>
<keyword id="KW-0326">Glycosidase</keyword>
<keyword id="KW-0378">Hydrolase</keyword>
<keyword id="KW-0732">Signal</keyword>
<sequence>MMKKKSWFTLMITGVISLFFSVSAFAGNVFWEPLSYFNSSTWQKADGYSNGQMFNCTWRANNVNFTNDGKLKLSLTSPANNKFDCGEYRSTNNYGYGLYEVSMKPAKNTGIVSSFFTYTGPSHGTQWDEIDIEFLGKDTTKVQFNYYTNGVGGHEKIINLGFDASTSFHTYAFDWQPGYIKWYVDGVLKHTATTNIPSTPGKIMMNLWNGTGVDSWLGSYNGANPLYAEYDWVKYTSN</sequence>
<proteinExistence type="inferred from homology"/>
<reference key="1">
    <citation type="journal article" date="1991" name="J. Bacteriol.">
        <title>Two beta-glycanase genes are clustered in Bacillus polymyxa: molecular cloning, expression, and sequence analysis of genes encoding a xylanase and an endo-beta-(1,3)-(1,4)-glucanase.</title>
        <authorList>
            <person name="Gosalbes M.J."/>
            <person name="Perez-Gonzalez J.A."/>
            <person name="Gonzalez R."/>
            <person name="Navarro A."/>
        </authorList>
    </citation>
    <scope>NUCLEOTIDE SEQUENCE [GENOMIC DNA]</scope>
    <source>
        <strain>ATCC 842 / DSM 36 / JCM 2507 / NBRC 15309 / NCIMB 8158 / NCTC 10343 / NRRL B-4317 / VKM B-514</strain>
    </source>
</reference>
<gene>
    <name type="primary">gluB</name>
</gene>
<protein>
    <recommendedName>
        <fullName>Beta-glucanase</fullName>
        <ecNumber>3.2.1.73</ecNumber>
    </recommendedName>
    <alternativeName>
        <fullName>1,3-1,4-beta-D-glucan 4-glucanohydrolase</fullName>
    </alternativeName>
    <alternativeName>
        <fullName>Endo-beta-1,3-1,4 glucanase</fullName>
    </alternativeName>
    <alternativeName>
        <fullName>Lichenase</fullName>
    </alternativeName>
</protein>
<feature type="signal peptide" evidence="2">
    <location>
        <begin position="1"/>
        <end position="26"/>
    </location>
</feature>
<feature type="chain" id="PRO_0000011790" description="Beta-glucanase">
    <location>
        <begin position="27"/>
        <end position="238"/>
    </location>
</feature>
<feature type="domain" description="GH16" evidence="3">
    <location>
        <begin position="29"/>
        <end position="238"/>
    </location>
</feature>
<feature type="active site" description="Nucleophile" evidence="4">
    <location>
        <position position="129"/>
    </location>
</feature>
<feature type="active site" description="Proton donor" evidence="4">
    <location>
        <position position="133"/>
    </location>
</feature>
<feature type="disulfide bond" evidence="1">
    <location>
        <begin position="56"/>
        <end position="85"/>
    </location>
</feature>
<accession>P45797</accession>
<name>GUB_PAEPO</name>
<comment type="catalytic activity">
    <reaction>
        <text>Hydrolysis of (1-&gt;4)-beta-D-glucosidic linkages in beta-D-glucans containing (1-&gt;3)- and (1-&gt;4)-bonds.</text>
        <dbReference type="EC" id="3.2.1.73"/>
    </reaction>
</comment>
<comment type="miscellaneous">
    <text>Beta-glucanases of Bacillus have a substrate range similar to lichenase of germinating barley.</text>
</comment>
<comment type="similarity">
    <text evidence="5">Belongs to the glycosyl hydrolase 16 family.</text>
</comment>
<evidence type="ECO:0000250" key="1"/>
<evidence type="ECO:0000255" key="2"/>
<evidence type="ECO:0000255" key="3">
    <source>
        <dbReference type="PROSITE-ProRule" id="PRU01098"/>
    </source>
</evidence>
<evidence type="ECO:0000255" key="4">
    <source>
        <dbReference type="PROSITE-ProRule" id="PRU10064"/>
    </source>
</evidence>
<evidence type="ECO:0000305" key="5"/>